<evidence type="ECO:0000255" key="1">
    <source>
        <dbReference type="HAMAP-Rule" id="MF_00445"/>
    </source>
</evidence>
<comment type="function">
    <text evidence="1">NDH shuttles electrons from NAD(P)H:plastoquinone, via FMN and iron-sulfur (Fe-S) centers, to quinones in the photosynthetic chain and possibly in a chloroplast respiratory chain. The immediate electron acceptor for the enzyme in this species is believed to be plastoquinone. Couples the redox reaction to proton translocation, and thus conserves the redox energy in a proton gradient.</text>
</comment>
<comment type="catalytic activity">
    <reaction evidence="1">
        <text>a plastoquinone + NADH + (n+1) H(+)(in) = a plastoquinol + NAD(+) + n H(+)(out)</text>
        <dbReference type="Rhea" id="RHEA:42608"/>
        <dbReference type="Rhea" id="RHEA-COMP:9561"/>
        <dbReference type="Rhea" id="RHEA-COMP:9562"/>
        <dbReference type="ChEBI" id="CHEBI:15378"/>
        <dbReference type="ChEBI" id="CHEBI:17757"/>
        <dbReference type="ChEBI" id="CHEBI:57540"/>
        <dbReference type="ChEBI" id="CHEBI:57945"/>
        <dbReference type="ChEBI" id="CHEBI:62192"/>
    </reaction>
</comment>
<comment type="catalytic activity">
    <reaction evidence="1">
        <text>a plastoquinone + NADPH + (n+1) H(+)(in) = a plastoquinol + NADP(+) + n H(+)(out)</text>
        <dbReference type="Rhea" id="RHEA:42612"/>
        <dbReference type="Rhea" id="RHEA-COMP:9561"/>
        <dbReference type="Rhea" id="RHEA-COMP:9562"/>
        <dbReference type="ChEBI" id="CHEBI:15378"/>
        <dbReference type="ChEBI" id="CHEBI:17757"/>
        <dbReference type="ChEBI" id="CHEBI:57783"/>
        <dbReference type="ChEBI" id="CHEBI:58349"/>
        <dbReference type="ChEBI" id="CHEBI:62192"/>
    </reaction>
</comment>
<comment type="subunit">
    <text evidence="1">NDH is composed of at least 16 different subunits, 5 of which are encoded in the nucleus.</text>
</comment>
<comment type="subcellular location">
    <subcellularLocation>
        <location evidence="1">Plastid</location>
        <location evidence="1">Chloroplast thylakoid membrane</location>
        <topology evidence="1">Multi-pass membrane protein</topology>
    </subcellularLocation>
</comment>
<comment type="similarity">
    <text evidence="1">Belongs to the complex I subunit 2 family.</text>
</comment>
<feature type="chain" id="PRO_0000344266" description="NAD(P)H-quinone oxidoreductase subunit 2 A, chloroplastic">
    <location>
        <begin position="1"/>
        <end position="510"/>
    </location>
</feature>
<feature type="transmembrane region" description="Helical" evidence="1">
    <location>
        <begin position="24"/>
        <end position="44"/>
    </location>
</feature>
<feature type="transmembrane region" description="Helical" evidence="1">
    <location>
        <begin position="59"/>
        <end position="79"/>
    </location>
</feature>
<feature type="transmembrane region" description="Helical" evidence="1">
    <location>
        <begin position="99"/>
        <end position="119"/>
    </location>
</feature>
<feature type="transmembrane region" description="Helical" evidence="1">
    <location>
        <begin position="124"/>
        <end position="144"/>
    </location>
</feature>
<feature type="transmembrane region" description="Helical" evidence="1">
    <location>
        <begin position="149"/>
        <end position="169"/>
    </location>
</feature>
<feature type="transmembrane region" description="Helical" evidence="1">
    <location>
        <begin position="183"/>
        <end position="203"/>
    </location>
</feature>
<feature type="transmembrane region" description="Helical" evidence="1">
    <location>
        <begin position="229"/>
        <end position="249"/>
    </location>
</feature>
<feature type="transmembrane region" description="Helical" evidence="1">
    <location>
        <begin position="295"/>
        <end position="315"/>
    </location>
</feature>
<feature type="transmembrane region" description="Helical" evidence="1">
    <location>
        <begin position="323"/>
        <end position="343"/>
    </location>
</feature>
<feature type="transmembrane region" description="Helical" evidence="1">
    <location>
        <begin position="354"/>
        <end position="374"/>
    </location>
</feature>
<feature type="transmembrane region" description="Helical" evidence="1">
    <location>
        <begin position="395"/>
        <end position="415"/>
    </location>
</feature>
<feature type="transmembrane region" description="Helical" evidence="1">
    <location>
        <begin position="418"/>
        <end position="438"/>
    </location>
</feature>
<accession>P0CC56</accession>
<accession>A6MMQ3</accession>
<gene>
    <name evidence="1" type="primary">ndhB1</name>
</gene>
<proteinExistence type="inferred from homology"/>
<name>NU2C1_DIOEL</name>
<protein>
    <recommendedName>
        <fullName evidence="1">NAD(P)H-quinone oxidoreductase subunit 2 A, chloroplastic</fullName>
        <ecNumber evidence="1">7.1.1.-</ecNumber>
    </recommendedName>
    <alternativeName>
        <fullName evidence="1">NAD(P)H dehydrogenase, subunit 2 A</fullName>
    </alternativeName>
    <alternativeName>
        <fullName evidence="1">NADH-plastoquinone oxidoreductase subunit 2 A</fullName>
    </alternativeName>
</protein>
<reference key="1">
    <citation type="journal article" date="2007" name="Mol. Phylogenet. Evol.">
        <title>Phylogenetic and evolutionary implications of complete chloroplast genome sequences of four early-diverging angiosperms: Buxus (Buxaceae), Chloranthus (Chloranthaceae), Dioscorea (Dioscoreaceae), and Illicium (Schisandraceae).</title>
        <authorList>
            <person name="Hansen D.R."/>
            <person name="Dastidar S.G."/>
            <person name="Cai Z."/>
            <person name="Penaflor C."/>
            <person name="Kuehl J.V."/>
            <person name="Boore J.L."/>
            <person name="Jansen R.K."/>
        </authorList>
    </citation>
    <scope>NUCLEOTIDE SEQUENCE [LARGE SCALE GENOMIC DNA]</scope>
</reference>
<organism>
    <name type="scientific">Dioscorea elephantipes</name>
    <name type="common">Elephant's foot yam</name>
    <name type="synonym">Testudinaria elephantipes</name>
    <dbReference type="NCBI Taxonomy" id="145284"/>
    <lineage>
        <taxon>Eukaryota</taxon>
        <taxon>Viridiplantae</taxon>
        <taxon>Streptophyta</taxon>
        <taxon>Embryophyta</taxon>
        <taxon>Tracheophyta</taxon>
        <taxon>Spermatophyta</taxon>
        <taxon>Magnoliopsida</taxon>
        <taxon>Liliopsida</taxon>
        <taxon>Dioscoreales</taxon>
        <taxon>Dioscoreaceae</taxon>
        <taxon>Dioscorea</taxon>
    </lineage>
</organism>
<dbReference type="EC" id="7.1.1.-" evidence="1"/>
<dbReference type="EMBL" id="EF380353">
    <property type="protein sequence ID" value="ABR01475.1"/>
    <property type="molecule type" value="Genomic_DNA"/>
</dbReference>
<dbReference type="SMR" id="P0CC56"/>
<dbReference type="GO" id="GO:0009535">
    <property type="term" value="C:chloroplast thylakoid membrane"/>
    <property type="evidence" value="ECO:0007669"/>
    <property type="project" value="UniProtKB-SubCell"/>
</dbReference>
<dbReference type="GO" id="GO:0008137">
    <property type="term" value="F:NADH dehydrogenase (ubiquinone) activity"/>
    <property type="evidence" value="ECO:0007669"/>
    <property type="project" value="InterPro"/>
</dbReference>
<dbReference type="GO" id="GO:0048038">
    <property type="term" value="F:quinone binding"/>
    <property type="evidence" value="ECO:0007669"/>
    <property type="project" value="UniProtKB-KW"/>
</dbReference>
<dbReference type="GO" id="GO:0042773">
    <property type="term" value="P:ATP synthesis coupled electron transport"/>
    <property type="evidence" value="ECO:0007669"/>
    <property type="project" value="InterPro"/>
</dbReference>
<dbReference type="GO" id="GO:0019684">
    <property type="term" value="P:photosynthesis, light reaction"/>
    <property type="evidence" value="ECO:0007669"/>
    <property type="project" value="UniProtKB-UniRule"/>
</dbReference>
<dbReference type="HAMAP" id="MF_00445">
    <property type="entry name" value="NDH1_NuoN_1"/>
    <property type="match status" value="1"/>
</dbReference>
<dbReference type="InterPro" id="IPR010096">
    <property type="entry name" value="NADH-Q_OxRdtase_suN/2"/>
</dbReference>
<dbReference type="InterPro" id="IPR001750">
    <property type="entry name" value="ND/Mrp_TM"/>
</dbReference>
<dbReference type="InterPro" id="IPR045693">
    <property type="entry name" value="Ndh2_N"/>
</dbReference>
<dbReference type="NCBIfam" id="TIGR01770">
    <property type="entry name" value="NDH_I_N"/>
    <property type="match status" value="1"/>
</dbReference>
<dbReference type="NCBIfam" id="NF002701">
    <property type="entry name" value="PRK02504.1"/>
    <property type="match status" value="1"/>
</dbReference>
<dbReference type="PANTHER" id="PTHR22773">
    <property type="entry name" value="NADH DEHYDROGENASE"/>
    <property type="match status" value="1"/>
</dbReference>
<dbReference type="Pfam" id="PF19530">
    <property type="entry name" value="Ndh2_N"/>
    <property type="match status" value="1"/>
</dbReference>
<dbReference type="Pfam" id="PF00361">
    <property type="entry name" value="Proton_antipo_M"/>
    <property type="match status" value="1"/>
</dbReference>
<dbReference type="PRINTS" id="PR01434">
    <property type="entry name" value="NADHDHGNASE5"/>
</dbReference>
<sequence>MIWHVQNENFILDSTRIFMKAFHLLLFHGSFIFPECILIFGLILLLMIDSTSDQKDRPWFYFISSTTLVMSITALLFRWREEPIISFSGNFQTNNFNEIFQFLILLCSTLCIPLSVEYIECTEMAITEFLLFVLTATLGGMFLCGANDLITLFVAPECFSLCSYLLSGYTKRDVRSNEATMKYLLMGGASSSILVHGFSWLYGSSGGEIELQEIVNGLINTQMYNSPGISIALISITVGIGFKLSPAPFHQWTPDVYEGSPTPVVAFLSVTSKVAASASATRIFDIPFYFSSNEWHLLLEILAILSMILGNLIAITQTSMKRMLAYSSIGQIGYVIIGIIVGDSNDGYASMITYMLFYISMNLGTFACIVSFGLRTGTDNIRDYAGLYTKDPFLALSLALCLLSLGGLPPLAGFFGKLHLFWCGWQAGLYFLVSIGLLTSVVSIYYYLKIIKLLMTGRNQEITPHVRNYRRSPLRSNNSIELSMTVCVIASTIPGISMNPILAIAQDTLF</sequence>
<geneLocation type="chloroplast"/>
<keyword id="KW-0150">Chloroplast</keyword>
<keyword id="KW-0472">Membrane</keyword>
<keyword id="KW-0520">NAD</keyword>
<keyword id="KW-0521">NADP</keyword>
<keyword id="KW-0934">Plastid</keyword>
<keyword id="KW-0618">Plastoquinone</keyword>
<keyword id="KW-0874">Quinone</keyword>
<keyword id="KW-0793">Thylakoid</keyword>
<keyword id="KW-1278">Translocase</keyword>
<keyword id="KW-0812">Transmembrane</keyword>
<keyword id="KW-1133">Transmembrane helix</keyword>
<keyword id="KW-0813">Transport</keyword>